<proteinExistence type="evidence at protein level"/>
<gene>
    <name evidence="19" type="primary">DSG3</name>
    <name type="synonym">CDHF6</name>
</gene>
<comment type="function">
    <text evidence="2 11 12 13 16 17">A component of desmosome cell-cell junctions which are required for positive regulation of cellular adhesion (PubMed:31835537). Required for adherens and desmosome junction assembly in response to mechanical force in keratinocytes (PubMed:31835537). Required for desmosome-mediated cell-cell adhesion of cells surrounding the telogen hair club and the basal layer of the outer root sheath epithelium, consequently is essential for the anchoring of telogen hairs in the hair follicle (PubMed:9701552). Required for the maintenance of the epithelial barrier via promoting desmosome-mediated intercellular attachment of suprabasal epithelium to basal cells (By similarity). May play a role in the protein stability of the desmosome plaque components DSP, JUP, PKP1, PKP2 and PKP3 (PubMed:22294297). Required for YAP1 localization at the plasma membrane in keratinocytes in response to mechanical strain, via the formation of an interaction complex composed of DSG3, PKP1 and YWHAG (PubMed:31835537). May also be involved in the positive regulation of YAP1 target gene transcription and as a result cell proliferation (PubMed:31835537). Positively regulates cellular contractility and cell junction formation via organization of cortical F-actin bundles and anchoring of actin to tight junctions, in conjunction with RAC1 (PubMed:22796473). The cytoplasmic pool of DSG3 is required for the localization of CDH1 and CTNNB1 at developing adherens junctions, potentially via modulation of SRC activity (PubMed:22294297). Inhibits keratinocyte migration via suppression of p38MAPK signaling, may therefore play a role in moderating wound healing (PubMed:26763450).</text>
</comment>
<comment type="subunit">
    <text evidence="2 5 9 10 11 12 16">Homodimer (PubMed:19717567). Part of a complex that contains DSG3, PKP1, YAP1 and YWHAG; the complex is required for localization of DSG3 and YAP1 to the cell membrane in keratinocytes (PubMed:31835537). Interacts with PKP2 (PubMed:11790773). Interacts with CTNND1; the interaction facilitates DSG3 localization and retention at cell-cell junctions (PubMed:18343367). Interacts with CDH1; the interaction is required for CDH1 localization to developing adherens junctions (PubMed:22294297). Interacts with RAC1; the interaction is required for DSG3 translocation to cell-cell junctions, organization of cortical F-actin bundles and actin anchoring at cell-cell junctions (PubMed:22796473). Interacts with DSC3; the interaction may limit the interaction of DSC3 with p38MAPK family members and therefore repress p38MAPK signaling activation (By similarity).</text>
</comment>
<comment type="subcellular location">
    <subcellularLocation>
        <location evidence="10 15 16">Cell membrane</location>
        <topology evidence="3">Single-pass type I membrane protein</topology>
    </subcellularLocation>
    <subcellularLocation>
        <location evidence="2">Cell junction</location>
        <location evidence="2">Desmosome</location>
    </subcellularLocation>
    <subcellularLocation>
        <location evidence="12 16">Cytoplasm</location>
    </subcellularLocation>
    <subcellularLocation>
        <location evidence="12">Cell junction</location>
        <location evidence="12">Tight junction</location>
    </subcellularLocation>
    <subcellularLocation>
        <location evidence="9">Cell junction</location>
    </subcellularLocation>
</comment>
<comment type="tissue specificity">
    <text evidence="7 10 11 14 17">Expressed throughout the basal and spinous layer of the epidermis with weak expression in the granular layer (at protein level) (PubMed:19717567). Expressed in skin and mucosa (at protein level) (PubMed:22294297, PubMed:30528827). Expressed in the basal layer of the outer root sheath of the telogen hair club, specifically at the cell membrane between the apex of the cells and the surrounding hair club (at protein level) (PubMed:9701552). Expression is less abundant between the lateral margins of the outer root sheath basal cells (at protein level) (PubMed:9701552). Also expressed in the tongue, tonsil and esophagus (PubMed:16740002).</text>
</comment>
<comment type="induction">
    <text evidence="16">Induced in the hours following cyclic mechanical strain in keratinocytes.</text>
</comment>
<comment type="domain">
    <text evidence="1">Three calcium ions are usually bound at the interface of each cadherin domain and rigidify the connections, imparting a strong curvature to the full-length ectodomain.</text>
</comment>
<comment type="disease" evidence="14">
    <disease id="DI-06040">
        <name>Blistering, acantholytic, of oral and laryngeal mucosa</name>
        <acronym>ABOLM</acronym>
        <description>An autosomal recessive disorder characterized by recurrent, suprabasal acantholytic blisters in the oral and laryngeal mucosa. Skin, conjunctival and genital mucosa, nail folds, and nails are unaffected. Normal structure is observed in the scalp epidermis and hair follicle.</description>
        <dbReference type="MIM" id="619226"/>
    </disease>
    <text>The disease may be caused by variants affecting the gene represented in this entry.</text>
</comment>
<comment type="miscellaneous">
    <text evidence="8 11 17">Pemphigus vulgaris (PV) is a potentially lethal skin disease in which epidermal blisters occur as the result of the loss of cell-cell adhesion caused by the action of autoantibodies against desmoglein 3 (PubMed:1720352). Loss of expression at points of cell-cell contact between the basal and suprabasal layers in blisters and immediately adjacent to blisters in PV (PubMed:22294297). In a PV patient acantholysis extends from the epidermis of the scalp down the entire outer root sheath of mostly empty dilated hair follicles that contain only small residual unanchored hair shafts and necrotic detached cells (PubMed:9701552). Although hair loss is not a major phenotype in PV due to the lower number of hair follicles in telogen phase in humans, this would suggest DSG3 disruption results in hair follicle abnormalities (PubMed:9701552).</text>
</comment>
<feature type="signal peptide" evidence="3">
    <location>
        <begin position="1"/>
        <end position="23"/>
    </location>
</feature>
<feature type="propeptide" id="PRO_0000003851" evidence="3">
    <location>
        <begin position="24"/>
        <end position="49"/>
    </location>
</feature>
<feature type="chain" id="PRO_0000003852" description="Desmoglein-3">
    <location>
        <begin position="50"/>
        <end position="999"/>
    </location>
</feature>
<feature type="topological domain" description="Extracellular" evidence="3">
    <location>
        <begin position="50"/>
        <end position="615"/>
    </location>
</feature>
<feature type="transmembrane region" description="Helical" evidence="3">
    <location>
        <begin position="616"/>
        <end position="640"/>
    </location>
</feature>
<feature type="topological domain" description="Cytoplasmic" evidence="3">
    <location>
        <begin position="641"/>
        <end position="999"/>
    </location>
</feature>
<feature type="domain" description="Cadherin 1" evidence="4">
    <location>
        <begin position="50"/>
        <end position="158"/>
    </location>
</feature>
<feature type="domain" description="Cadherin 2" evidence="4">
    <location>
        <begin position="159"/>
        <end position="268"/>
    </location>
</feature>
<feature type="domain" description="Cadherin 3" evidence="4">
    <location>
        <begin position="269"/>
        <end position="383"/>
    </location>
</feature>
<feature type="domain" description="Cadherin 4" evidence="4">
    <location>
        <begin position="386"/>
        <end position="499"/>
    </location>
</feature>
<feature type="repeat" description="Desmoglein repeat 1">
    <location>
        <begin position="910"/>
        <end position="935"/>
    </location>
</feature>
<feature type="repeat" description="Desmoglein repeat 2">
    <location>
        <begin position="936"/>
        <end position="966"/>
    </location>
</feature>
<feature type="region of interest" description="Required for interaction with CTNND1 and localization at cell-cell junctions" evidence="2">
    <location>
        <begin position="642"/>
        <end position="714"/>
    </location>
</feature>
<feature type="glycosylation site" description="N-linked (GlcNAc...) asparagine" evidence="3">
    <location>
        <position position="110"/>
    </location>
</feature>
<feature type="glycosylation site" description="N-linked (GlcNAc...) asparagine" evidence="3">
    <location>
        <position position="180"/>
    </location>
</feature>
<feature type="glycosylation site" description="N-linked (GlcNAc...) asparagine" evidence="7">
    <location>
        <position position="459"/>
    </location>
</feature>
<feature type="glycosylation site" description="N-linked (GlcNAc...) asparagine" evidence="7">
    <location>
        <position position="545"/>
    </location>
</feature>
<feature type="sequence variant" id="VAR_085271" description="In ABOLM; uncertain significance; loss of expression in skin and mucosa." evidence="14">
    <location>
        <begin position="287"/>
        <end position="999"/>
    </location>
</feature>
<feature type="sequence variant" id="VAR_055578" description="In dbSNP:rs16961975.">
    <original>V</original>
    <variation>M</variation>
    <location>
        <position position="509"/>
    </location>
</feature>
<feature type="sequence variant" id="VAR_059178" description="In dbSNP:rs1380866." evidence="6 8">
    <original>T</original>
    <variation>A</variation>
    <location>
        <position position="912"/>
    </location>
</feature>
<feature type="sequence conflict" description="In Ref. 2; BAF83056." evidence="18" ref="2">
    <original>N</original>
    <variation>D</variation>
    <location>
        <position position="110"/>
    </location>
</feature>
<feature type="sequence conflict" description="In Ref. 2; BAF83056." evidence="18" ref="2">
    <original>T</original>
    <variation>A</variation>
    <location>
        <position position="298"/>
    </location>
</feature>
<feature type="turn" evidence="20">
    <location>
        <begin position="65"/>
        <end position="67"/>
    </location>
</feature>
<feature type="strand" evidence="20">
    <location>
        <begin position="70"/>
        <end position="72"/>
    </location>
</feature>
<feature type="helix" evidence="20">
    <location>
        <begin position="76"/>
        <end position="78"/>
    </location>
</feature>
<feature type="strand" evidence="20">
    <location>
        <begin position="84"/>
        <end position="89"/>
    </location>
</feature>
<feature type="turn" evidence="20">
    <location>
        <begin position="90"/>
        <end position="92"/>
    </location>
</feature>
<feature type="strand" evidence="20">
    <location>
        <begin position="93"/>
        <end position="96"/>
    </location>
</feature>
<feature type="strand" evidence="20">
    <location>
        <begin position="98"/>
        <end position="102"/>
    </location>
</feature>
<feature type="turn" evidence="20">
    <location>
        <begin position="104"/>
        <end position="106"/>
    </location>
</feature>
<feature type="strand" evidence="20">
    <location>
        <begin position="108"/>
        <end position="111"/>
    </location>
</feature>
<feature type="turn" evidence="20">
    <location>
        <begin position="117"/>
        <end position="119"/>
    </location>
</feature>
<feature type="strand" evidence="20">
    <location>
        <begin position="121"/>
        <end position="130"/>
    </location>
</feature>
<feature type="strand" evidence="20">
    <location>
        <begin position="141"/>
        <end position="148"/>
    </location>
</feature>
<feature type="strand" evidence="20">
    <location>
        <begin position="156"/>
        <end position="158"/>
    </location>
</feature>
<feature type="strand" evidence="20">
    <location>
        <begin position="160"/>
        <end position="166"/>
    </location>
</feature>
<feature type="strand" evidence="20">
    <location>
        <begin position="175"/>
        <end position="178"/>
    </location>
</feature>
<feature type="strand" evidence="20">
    <location>
        <begin position="187"/>
        <end position="189"/>
    </location>
</feature>
<feature type="turn" evidence="20">
    <location>
        <begin position="190"/>
        <end position="192"/>
    </location>
</feature>
<feature type="strand" evidence="20">
    <location>
        <begin position="198"/>
        <end position="201"/>
    </location>
</feature>
<feature type="strand" evidence="20">
    <location>
        <begin position="209"/>
        <end position="211"/>
    </location>
</feature>
<feature type="turn" evidence="20">
    <location>
        <begin position="213"/>
        <end position="215"/>
    </location>
</feature>
<feature type="strand" evidence="20">
    <location>
        <begin position="217"/>
        <end position="220"/>
    </location>
</feature>
<feature type="turn" evidence="20">
    <location>
        <begin position="227"/>
        <end position="229"/>
    </location>
</feature>
<feature type="strand" evidence="20">
    <location>
        <begin position="231"/>
        <end position="241"/>
    </location>
</feature>
<feature type="helix" evidence="20">
    <location>
        <begin position="242"/>
        <end position="244"/>
    </location>
</feature>
<feature type="strand" evidence="20">
    <location>
        <begin position="248"/>
        <end position="257"/>
    </location>
</feature>
<feature type="strand" evidence="20">
    <location>
        <begin position="266"/>
        <end position="270"/>
    </location>
</feature>
<feature type="strand" evidence="20">
    <location>
        <begin position="272"/>
        <end position="277"/>
    </location>
</feature>
<feature type="strand" evidence="20">
    <location>
        <begin position="282"/>
        <end position="288"/>
    </location>
</feature>
<feature type="turn" evidence="20">
    <location>
        <begin position="299"/>
        <end position="301"/>
    </location>
</feature>
<feature type="strand" evidence="20">
    <location>
        <begin position="303"/>
        <end position="310"/>
    </location>
</feature>
<feature type="strand" evidence="20">
    <location>
        <begin position="316"/>
        <end position="320"/>
    </location>
</feature>
<feature type="turn" evidence="20">
    <location>
        <begin position="322"/>
        <end position="324"/>
    </location>
</feature>
<feature type="strand" evidence="20">
    <location>
        <begin position="327"/>
        <end position="331"/>
    </location>
</feature>
<feature type="turn" evidence="20">
    <location>
        <begin position="337"/>
        <end position="339"/>
    </location>
</feature>
<feature type="strand" evidence="20">
    <location>
        <begin position="341"/>
        <end position="353"/>
    </location>
</feature>
<feature type="turn" evidence="20">
    <location>
        <begin position="357"/>
        <end position="359"/>
    </location>
</feature>
<feature type="helix" evidence="20">
    <location>
        <begin position="360"/>
        <end position="362"/>
    </location>
</feature>
<feature type="strand" evidence="20">
    <location>
        <begin position="368"/>
        <end position="375"/>
    </location>
</feature>
<feature type="strand" evidence="20">
    <location>
        <begin position="384"/>
        <end position="391"/>
    </location>
</feature>
<feature type="strand" evidence="20">
    <location>
        <begin position="394"/>
        <end position="396"/>
    </location>
</feature>
<feature type="strand" evidence="20">
    <location>
        <begin position="412"/>
        <end position="419"/>
    </location>
</feature>
<feature type="strand" evidence="20">
    <location>
        <begin position="422"/>
        <end position="429"/>
    </location>
</feature>
<feature type="helix" evidence="20">
    <location>
        <begin position="431"/>
        <end position="433"/>
    </location>
</feature>
<feature type="strand" evidence="20">
    <location>
        <begin position="435"/>
        <end position="437"/>
    </location>
</feature>
<feature type="turn" evidence="20">
    <location>
        <begin position="439"/>
        <end position="441"/>
    </location>
</feature>
<feature type="strand" evidence="20">
    <location>
        <begin position="443"/>
        <end position="446"/>
    </location>
</feature>
<feature type="turn" evidence="20">
    <location>
        <begin position="453"/>
        <end position="456"/>
    </location>
</feature>
<feature type="strand" evidence="20">
    <location>
        <begin position="459"/>
        <end position="470"/>
    </location>
</feature>
<feature type="turn" evidence="20">
    <location>
        <begin position="471"/>
        <end position="473"/>
    </location>
</feature>
<feature type="strand" evidence="20">
    <location>
        <begin position="477"/>
        <end position="484"/>
    </location>
</feature>
<name>DSG3_HUMAN</name>
<dbReference type="EMBL" id="M76482">
    <property type="protein sequence ID" value="AAA60230.1"/>
    <property type="molecule type" value="mRNA"/>
</dbReference>
<dbReference type="EMBL" id="AK290367">
    <property type="protein sequence ID" value="BAF83056.1"/>
    <property type="molecule type" value="mRNA"/>
</dbReference>
<dbReference type="EMBL" id="AC021549">
    <property type="status" value="NOT_ANNOTATED_CDS"/>
    <property type="molecule type" value="mRNA"/>
</dbReference>
<dbReference type="CCDS" id="CCDS11898.1"/>
<dbReference type="PIR" id="A41088">
    <property type="entry name" value="IJHUG3"/>
</dbReference>
<dbReference type="RefSeq" id="NP_001935.2">
    <property type="nucleotide sequence ID" value="NM_001944.3"/>
</dbReference>
<dbReference type="PDB" id="5EQX">
    <property type="method" value="X-ray"/>
    <property type="resolution" value="3.05 A"/>
    <property type="chains" value="A=50-598"/>
</dbReference>
<dbReference type="PDBsum" id="5EQX"/>
<dbReference type="SMR" id="P32926"/>
<dbReference type="BioGRID" id="108164">
    <property type="interactions" value="46"/>
</dbReference>
<dbReference type="ELM" id="P32926"/>
<dbReference type="FunCoup" id="P32926">
    <property type="interactions" value="72"/>
</dbReference>
<dbReference type="IntAct" id="P32926">
    <property type="interactions" value="25"/>
</dbReference>
<dbReference type="STRING" id="9606.ENSP00000257189"/>
<dbReference type="Allergome" id="8248">
    <property type="allergen name" value="Hom s DSG3"/>
</dbReference>
<dbReference type="TCDB" id="8.A.204.1.7">
    <property type="family name" value="the cadhesin (cdh) family"/>
</dbReference>
<dbReference type="GlyCosmos" id="P32926">
    <property type="glycosylation" value="4 sites, No reported glycans"/>
</dbReference>
<dbReference type="GlyGen" id="P32926">
    <property type="glycosylation" value="12 sites, 2 O-linked glycans (5 sites)"/>
</dbReference>
<dbReference type="iPTMnet" id="P32926"/>
<dbReference type="PhosphoSitePlus" id="P32926"/>
<dbReference type="SwissPalm" id="P32926"/>
<dbReference type="BioMuta" id="DSG3"/>
<dbReference type="DMDM" id="239938621"/>
<dbReference type="CPTAC" id="CPTAC-62"/>
<dbReference type="CPTAC" id="CPTAC-63"/>
<dbReference type="jPOST" id="P32926"/>
<dbReference type="MassIVE" id="P32926"/>
<dbReference type="PaxDb" id="9606-ENSP00000257189"/>
<dbReference type="PeptideAtlas" id="P32926"/>
<dbReference type="PRIDE" id="P32926"/>
<dbReference type="ProteomicsDB" id="54887"/>
<dbReference type="ABCD" id="P32926">
    <property type="antibodies" value="49 sequenced antibodies"/>
</dbReference>
<dbReference type="Antibodypedia" id="3464">
    <property type="antibodies" value="822 antibodies from 36 providers"/>
</dbReference>
<dbReference type="DNASU" id="1830"/>
<dbReference type="Ensembl" id="ENST00000257189.5">
    <property type="protein sequence ID" value="ENSP00000257189.4"/>
    <property type="gene ID" value="ENSG00000134757.5"/>
</dbReference>
<dbReference type="GeneID" id="1830"/>
<dbReference type="KEGG" id="hsa:1830"/>
<dbReference type="MANE-Select" id="ENST00000257189.5">
    <property type="protein sequence ID" value="ENSP00000257189.4"/>
    <property type="RefSeq nucleotide sequence ID" value="NM_001944.3"/>
    <property type="RefSeq protein sequence ID" value="NP_001935.2"/>
</dbReference>
<dbReference type="UCSC" id="uc002kws.4">
    <property type="organism name" value="human"/>
</dbReference>
<dbReference type="AGR" id="HGNC:3050"/>
<dbReference type="CTD" id="1830"/>
<dbReference type="DisGeNET" id="1830"/>
<dbReference type="GeneCards" id="DSG3"/>
<dbReference type="HGNC" id="HGNC:3050">
    <property type="gene designation" value="DSG3"/>
</dbReference>
<dbReference type="HPA" id="ENSG00000134757">
    <property type="expression patterns" value="Tissue enhanced (esophagus, vagina)"/>
</dbReference>
<dbReference type="MalaCards" id="DSG3"/>
<dbReference type="MIM" id="169615">
    <property type="type" value="gene"/>
</dbReference>
<dbReference type="MIM" id="619226">
    <property type="type" value="phenotype"/>
</dbReference>
<dbReference type="neXtProt" id="NX_P32926"/>
<dbReference type="OpenTargets" id="ENSG00000134757"/>
<dbReference type="PharmGKB" id="PA27503"/>
<dbReference type="VEuPathDB" id="HostDB:ENSG00000134757"/>
<dbReference type="eggNOG" id="KOG3594">
    <property type="taxonomic scope" value="Eukaryota"/>
</dbReference>
<dbReference type="GeneTree" id="ENSGT01030000234624"/>
<dbReference type="HOGENOM" id="CLU_005284_0_0_1"/>
<dbReference type="InParanoid" id="P32926"/>
<dbReference type="OMA" id="CQCDNRD"/>
<dbReference type="OrthoDB" id="8961010at2759"/>
<dbReference type="PAN-GO" id="P32926">
    <property type="GO annotations" value="3 GO annotations based on evolutionary models"/>
</dbReference>
<dbReference type="PhylomeDB" id="P32926"/>
<dbReference type="TreeFam" id="TF331809"/>
<dbReference type="PathwayCommons" id="P32926"/>
<dbReference type="Reactome" id="R-HSA-351906">
    <property type="pathway name" value="Apoptotic cleavage of cell adhesion proteins"/>
</dbReference>
<dbReference type="Reactome" id="R-HSA-6805567">
    <property type="pathway name" value="Keratinization"/>
</dbReference>
<dbReference type="Reactome" id="R-HSA-6809371">
    <property type="pathway name" value="Formation of the cornified envelope"/>
</dbReference>
<dbReference type="SignaLink" id="P32926"/>
<dbReference type="BioGRID-ORCS" id="1830">
    <property type="hits" value="10 hits in 1141 CRISPR screens"/>
</dbReference>
<dbReference type="ChiTaRS" id="DSG3">
    <property type="organism name" value="human"/>
</dbReference>
<dbReference type="GeneWiki" id="Desmoglein_3"/>
<dbReference type="GenomeRNAi" id="1830"/>
<dbReference type="Pharos" id="P32926">
    <property type="development level" value="Tbio"/>
</dbReference>
<dbReference type="PRO" id="PR:P32926"/>
<dbReference type="Proteomes" id="UP000005640">
    <property type="component" value="Chromosome 18"/>
</dbReference>
<dbReference type="RNAct" id="P32926">
    <property type="molecule type" value="protein"/>
</dbReference>
<dbReference type="Bgee" id="ENSG00000134757">
    <property type="expression patterns" value="Expressed in gingiva and 102 other cell types or tissues"/>
</dbReference>
<dbReference type="GO" id="GO:0005923">
    <property type="term" value="C:bicellular tight junction"/>
    <property type="evidence" value="ECO:0007669"/>
    <property type="project" value="UniProtKB-SubCell"/>
</dbReference>
<dbReference type="GO" id="GO:0030054">
    <property type="term" value="C:cell junction"/>
    <property type="evidence" value="ECO:0000314"/>
    <property type="project" value="UniProtKB"/>
</dbReference>
<dbReference type="GO" id="GO:0005911">
    <property type="term" value="C:cell-cell junction"/>
    <property type="evidence" value="ECO:0000314"/>
    <property type="project" value="UniProtKB"/>
</dbReference>
<dbReference type="GO" id="GO:0001533">
    <property type="term" value="C:cornified envelope"/>
    <property type="evidence" value="ECO:0000304"/>
    <property type="project" value="Reactome"/>
</dbReference>
<dbReference type="GO" id="GO:0005737">
    <property type="term" value="C:cytoplasm"/>
    <property type="evidence" value="ECO:0000314"/>
    <property type="project" value="UniProtKB"/>
</dbReference>
<dbReference type="GO" id="GO:0005829">
    <property type="term" value="C:cytosol"/>
    <property type="evidence" value="ECO:0000304"/>
    <property type="project" value="Reactome"/>
</dbReference>
<dbReference type="GO" id="GO:0030057">
    <property type="term" value="C:desmosome"/>
    <property type="evidence" value="ECO:0000318"/>
    <property type="project" value="GO_Central"/>
</dbReference>
<dbReference type="GO" id="GO:0070062">
    <property type="term" value="C:extracellular exosome"/>
    <property type="evidence" value="ECO:0007005"/>
    <property type="project" value="UniProtKB"/>
</dbReference>
<dbReference type="GO" id="GO:0005886">
    <property type="term" value="C:plasma membrane"/>
    <property type="evidence" value="ECO:0000314"/>
    <property type="project" value="UniProtKB"/>
</dbReference>
<dbReference type="GO" id="GO:0070160">
    <property type="term" value="C:tight junction"/>
    <property type="evidence" value="ECO:0000250"/>
    <property type="project" value="UniProtKB"/>
</dbReference>
<dbReference type="GO" id="GO:0005509">
    <property type="term" value="F:calcium ion binding"/>
    <property type="evidence" value="ECO:0000318"/>
    <property type="project" value="GO_Central"/>
</dbReference>
<dbReference type="GO" id="GO:0046983">
    <property type="term" value="F:protein dimerization activity"/>
    <property type="evidence" value="ECO:0000250"/>
    <property type="project" value="UniProtKB"/>
</dbReference>
<dbReference type="GO" id="GO:0007015">
    <property type="term" value="P:actin filament organization"/>
    <property type="evidence" value="ECO:0000250"/>
    <property type="project" value="UniProtKB"/>
</dbReference>
<dbReference type="GO" id="GO:0034333">
    <property type="term" value="P:adherens junction assembly"/>
    <property type="evidence" value="ECO:0000315"/>
    <property type="project" value="UniProtKB"/>
</dbReference>
<dbReference type="GO" id="GO:0098609">
    <property type="term" value="P:cell-cell adhesion"/>
    <property type="evidence" value="ECO:0000318"/>
    <property type="project" value="GO_Central"/>
</dbReference>
<dbReference type="GO" id="GO:0002159">
    <property type="term" value="P:desmosome assembly"/>
    <property type="evidence" value="ECO:0000315"/>
    <property type="project" value="UniProtKB"/>
</dbReference>
<dbReference type="GO" id="GO:0007156">
    <property type="term" value="P:homophilic cell adhesion via plasma membrane adhesion molecules"/>
    <property type="evidence" value="ECO:0007669"/>
    <property type="project" value="InterPro"/>
</dbReference>
<dbReference type="GO" id="GO:0030336">
    <property type="term" value="P:negative regulation of cell migration"/>
    <property type="evidence" value="ECO:0000315"/>
    <property type="project" value="UniProtKB"/>
</dbReference>
<dbReference type="GO" id="GO:1903753">
    <property type="term" value="P:negative regulation of p38MAPK cascade"/>
    <property type="evidence" value="ECO:0000315"/>
    <property type="project" value="UniProtKB"/>
</dbReference>
<dbReference type="GO" id="GO:1903348">
    <property type="term" value="P:positive regulation of bicellular tight junction assembly"/>
    <property type="evidence" value="ECO:0000250"/>
    <property type="project" value="UniProtKB"/>
</dbReference>
<dbReference type="GO" id="GO:1904704">
    <property type="term" value="P:positive regulation of protein localization to adherens junction"/>
    <property type="evidence" value="ECO:0000315"/>
    <property type="project" value="UniProtKB"/>
</dbReference>
<dbReference type="GO" id="GO:1905477">
    <property type="term" value="P:positive regulation of protein localization to membrane"/>
    <property type="evidence" value="ECO:0000315"/>
    <property type="project" value="UniProtKB"/>
</dbReference>
<dbReference type="GO" id="GO:0031647">
    <property type="term" value="P:regulation of protein stability"/>
    <property type="evidence" value="ECO:0000315"/>
    <property type="project" value="UniProtKB"/>
</dbReference>
<dbReference type="GO" id="GO:0120192">
    <property type="term" value="P:tight junction assembly"/>
    <property type="evidence" value="ECO:0000315"/>
    <property type="project" value="UniProtKB"/>
</dbReference>
<dbReference type="CDD" id="cd11304">
    <property type="entry name" value="Cadherin_repeat"/>
    <property type="match status" value="4"/>
</dbReference>
<dbReference type="FunFam" id="2.60.40.60:FF:000011">
    <property type="entry name" value="Cadherin 1"/>
    <property type="match status" value="1"/>
</dbReference>
<dbReference type="FunFam" id="2.60.40.60:FF:000031">
    <property type="entry name" value="Cadherin 3"/>
    <property type="match status" value="1"/>
</dbReference>
<dbReference type="FunFam" id="2.60.40.60:FF:000068">
    <property type="entry name" value="Desmoglein 1"/>
    <property type="match status" value="1"/>
</dbReference>
<dbReference type="FunFam" id="2.60.40.60:FF:000083">
    <property type="entry name" value="Desmoglein 1"/>
    <property type="match status" value="1"/>
</dbReference>
<dbReference type="FunFam" id="4.10.900.10:FF:000003">
    <property type="entry name" value="Desmoglein 1"/>
    <property type="match status" value="1"/>
</dbReference>
<dbReference type="FunFam" id="2.60.40.60:FF:000074">
    <property type="entry name" value="Desmoglein 4"/>
    <property type="match status" value="1"/>
</dbReference>
<dbReference type="Gene3D" id="2.60.40.60">
    <property type="entry name" value="Cadherins"/>
    <property type="match status" value="5"/>
</dbReference>
<dbReference type="Gene3D" id="4.10.900.10">
    <property type="entry name" value="TCF3-CBD (Catenin binding domain)"/>
    <property type="match status" value="1"/>
</dbReference>
<dbReference type="InterPro" id="IPR050971">
    <property type="entry name" value="Cadherin-domain_protein"/>
</dbReference>
<dbReference type="InterPro" id="IPR002126">
    <property type="entry name" value="Cadherin-like_dom"/>
</dbReference>
<dbReference type="InterPro" id="IPR015919">
    <property type="entry name" value="Cadherin-like_sf"/>
</dbReference>
<dbReference type="InterPro" id="IPR020894">
    <property type="entry name" value="Cadherin_CS"/>
</dbReference>
<dbReference type="InterPro" id="IPR027397">
    <property type="entry name" value="Catenin-bd_sf"/>
</dbReference>
<dbReference type="InterPro" id="IPR009122">
    <property type="entry name" value="Desmosomal_cadherin"/>
</dbReference>
<dbReference type="PANTHER" id="PTHR24025">
    <property type="entry name" value="DESMOGLEIN FAMILY MEMBER"/>
    <property type="match status" value="1"/>
</dbReference>
<dbReference type="PANTHER" id="PTHR24025:SF3">
    <property type="entry name" value="DESMOGLEIN-3"/>
    <property type="match status" value="1"/>
</dbReference>
<dbReference type="Pfam" id="PF00028">
    <property type="entry name" value="Cadherin"/>
    <property type="match status" value="3"/>
</dbReference>
<dbReference type="PRINTS" id="PR00205">
    <property type="entry name" value="CADHERIN"/>
</dbReference>
<dbReference type="PRINTS" id="PR01818">
    <property type="entry name" value="DESMOCADHERN"/>
</dbReference>
<dbReference type="PRINTS" id="PR01819">
    <property type="entry name" value="DESMOGLEIN"/>
</dbReference>
<dbReference type="SMART" id="SM00112">
    <property type="entry name" value="CA"/>
    <property type="match status" value="4"/>
</dbReference>
<dbReference type="SUPFAM" id="SSF49313">
    <property type="entry name" value="Cadherin-like"/>
    <property type="match status" value="4"/>
</dbReference>
<dbReference type="PROSITE" id="PS00232">
    <property type="entry name" value="CADHERIN_1"/>
    <property type="match status" value="3"/>
</dbReference>
<dbReference type="PROSITE" id="PS50268">
    <property type="entry name" value="CADHERIN_2"/>
    <property type="match status" value="4"/>
</dbReference>
<sequence length="999" mass="107533">MMGLFPRTTGALAIFVVVILVHGELRIETKGQYDEEEMTMQQAKRRQKREWVKFAKPCREGEDNSKRNPIAKITSDYQATQKITYRISGVGIDQPPFGIFVVDKNTGDINITAIVDREETPSFLITCRALNAQGLDVEKPLILTVKILDINDNPPVFSQQIFMGEIEENSASNSLVMILNATDADEPNHLNSKIAFKIVSQEPAGTPMFLLSRNTGEVRTLTNSLDREQASSYRLVVSGADKDGEGLSTQCECNIKVKDVNDNFPMFRDSQYSARIEENILSSELLRFQVTDLDEEYTDNWLAVYFFTSGNEGNWFEIQTDPRTNEGILKVVKALDYEQLQSVKLSIAVKNKAEFHQSVISRYRVQSTPVTIQVINVREGIAFRPASKTFTVQKGISSKKLVDYILGTYQAIDEDTNKAASNVKYVMGRNDGGYLMIDSKTAEIKFVKNMNRDSTFIVNKTITAEVLAIDEYTGKTSTGTVYVRVPDFNDNCPTAVLEKDAVCSSSPSVVVSARTLNNRYTGPYTFALEDQPVKLPAVWSITTLNATSALLRAQEQIPPGVYHISLVLTDSQNNRCEMPRSLTLEVCQCDNRGICGTSYPTTSPGTRYGRPHSGRLGPAAIGLLLLGLLLLLLAPLLLLTCDCGAGSTGGVTGGFIPVPDGSEGTIHQWGIEGAHPEDKEITNICVPPVTANGADFMESSEVCTNTYARGTAVEGTSGMEMTTKLGAATESGGAAGFATGTVSGAASGFGAATGVGICSSGQSGTMRTRHSTGGTNKDYADGAISMNFLDSYFSQKAFACAEEDDGQEANDCLLIYDNEGADATGSPVGSVGCCSFIADDLDDSFLDSLGPKFKKLAEISLGVDGEGKEVQPPSKDSGYGIESCGHPIEVQQTGFVKCQTLSGSQGASALSTSGSVQPAVSIPDPLQHGNYLVTETYSASGSLVQPSTAGFDPLLTQNVIVTERVICPISSVPGNLAGPTQLRGSHTMLCTEDPCSRLI</sequence>
<organism>
    <name type="scientific">Homo sapiens</name>
    <name type="common">Human</name>
    <dbReference type="NCBI Taxonomy" id="9606"/>
    <lineage>
        <taxon>Eukaryota</taxon>
        <taxon>Metazoa</taxon>
        <taxon>Chordata</taxon>
        <taxon>Craniata</taxon>
        <taxon>Vertebrata</taxon>
        <taxon>Euteleostomi</taxon>
        <taxon>Mammalia</taxon>
        <taxon>Eutheria</taxon>
        <taxon>Euarchontoglires</taxon>
        <taxon>Primates</taxon>
        <taxon>Haplorrhini</taxon>
        <taxon>Catarrhini</taxon>
        <taxon>Hominidae</taxon>
        <taxon>Homo</taxon>
    </lineage>
</organism>
<accession>P32926</accession>
<accession>A8K2V2</accession>
<protein>
    <recommendedName>
        <fullName evidence="18">Desmoglein-3</fullName>
    </recommendedName>
    <alternativeName>
        <fullName>130 kDa pemphigus vulgaris antigen</fullName>
        <shortName>PVA</shortName>
    </alternativeName>
    <alternativeName>
        <fullName>Cadherin family member 6</fullName>
    </alternativeName>
</protein>
<evidence type="ECO:0000250" key="1"/>
<evidence type="ECO:0000250" key="2">
    <source>
        <dbReference type="UniProtKB" id="O35902"/>
    </source>
</evidence>
<evidence type="ECO:0000255" key="3"/>
<evidence type="ECO:0000255" key="4">
    <source>
        <dbReference type="PROSITE-ProRule" id="PRU00043"/>
    </source>
</evidence>
<evidence type="ECO:0000269" key="5">
    <source>
    </source>
</evidence>
<evidence type="ECO:0000269" key="6">
    <source>
    </source>
</evidence>
<evidence type="ECO:0000269" key="7">
    <source>
    </source>
</evidence>
<evidence type="ECO:0000269" key="8">
    <source>
    </source>
</evidence>
<evidence type="ECO:0000269" key="9">
    <source>
    </source>
</evidence>
<evidence type="ECO:0000269" key="10">
    <source>
    </source>
</evidence>
<evidence type="ECO:0000269" key="11">
    <source>
    </source>
</evidence>
<evidence type="ECO:0000269" key="12">
    <source>
    </source>
</evidence>
<evidence type="ECO:0000269" key="13">
    <source>
    </source>
</evidence>
<evidence type="ECO:0000269" key="14">
    <source>
    </source>
</evidence>
<evidence type="ECO:0000269" key="15">
    <source>
    </source>
</evidence>
<evidence type="ECO:0000269" key="16">
    <source>
    </source>
</evidence>
<evidence type="ECO:0000269" key="17">
    <source>
    </source>
</evidence>
<evidence type="ECO:0000305" key="18"/>
<evidence type="ECO:0000312" key="19">
    <source>
        <dbReference type="HGNC" id="HGNC:3050"/>
    </source>
</evidence>
<evidence type="ECO:0007829" key="20">
    <source>
        <dbReference type="PDB" id="5EQX"/>
    </source>
</evidence>
<keyword id="KW-0002">3D-structure</keyword>
<keyword id="KW-0106">Calcium</keyword>
<keyword id="KW-0130">Cell adhesion</keyword>
<keyword id="KW-0965">Cell junction</keyword>
<keyword id="KW-1003">Cell membrane</keyword>
<keyword id="KW-0165">Cleavage on pair of basic residues</keyword>
<keyword id="KW-0963">Cytoplasm</keyword>
<keyword id="KW-0325">Glycoprotein</keyword>
<keyword id="KW-0472">Membrane</keyword>
<keyword id="KW-0479">Metal-binding</keyword>
<keyword id="KW-1267">Proteomics identification</keyword>
<keyword id="KW-1185">Reference proteome</keyword>
<keyword id="KW-0677">Repeat</keyword>
<keyword id="KW-0732">Signal</keyword>
<keyword id="KW-0796">Tight junction</keyword>
<keyword id="KW-0812">Transmembrane</keyword>
<keyword id="KW-1133">Transmembrane helix</keyword>
<reference key="1">
    <citation type="journal article" date="1991" name="Cell">
        <title>Autoantibodies against a novel epithelial cadherin in pemphigus vulgaris, a disease of cell adhesion.</title>
        <authorList>
            <person name="Amagai M."/>
            <person name="Klaus-Kovtun V."/>
            <person name="Stanley J.R."/>
        </authorList>
    </citation>
    <scope>NUCLEOTIDE SEQUENCE [MRNA]</scope>
    <scope>INVOLVEMENT IN PEMPHIGUS VULGARIS</scope>
    <scope>VARIANT ALA-912</scope>
</reference>
<reference key="2">
    <citation type="journal article" date="2004" name="Nat. Genet.">
        <title>Complete sequencing and characterization of 21,243 full-length human cDNAs.</title>
        <authorList>
            <person name="Ota T."/>
            <person name="Suzuki Y."/>
            <person name="Nishikawa T."/>
            <person name="Otsuki T."/>
            <person name="Sugiyama T."/>
            <person name="Irie R."/>
            <person name="Wakamatsu A."/>
            <person name="Hayashi K."/>
            <person name="Sato H."/>
            <person name="Nagai K."/>
            <person name="Kimura K."/>
            <person name="Makita H."/>
            <person name="Sekine M."/>
            <person name="Obayashi M."/>
            <person name="Nishi T."/>
            <person name="Shibahara T."/>
            <person name="Tanaka T."/>
            <person name="Ishii S."/>
            <person name="Yamamoto J."/>
            <person name="Saito K."/>
            <person name="Kawai Y."/>
            <person name="Isono Y."/>
            <person name="Nakamura Y."/>
            <person name="Nagahari K."/>
            <person name="Murakami K."/>
            <person name="Yasuda T."/>
            <person name="Iwayanagi T."/>
            <person name="Wagatsuma M."/>
            <person name="Shiratori A."/>
            <person name="Sudo H."/>
            <person name="Hosoiri T."/>
            <person name="Kaku Y."/>
            <person name="Kodaira H."/>
            <person name="Kondo H."/>
            <person name="Sugawara M."/>
            <person name="Takahashi M."/>
            <person name="Kanda K."/>
            <person name="Yokoi T."/>
            <person name="Furuya T."/>
            <person name="Kikkawa E."/>
            <person name="Omura Y."/>
            <person name="Abe K."/>
            <person name="Kamihara K."/>
            <person name="Katsuta N."/>
            <person name="Sato K."/>
            <person name="Tanikawa M."/>
            <person name="Yamazaki M."/>
            <person name="Ninomiya K."/>
            <person name="Ishibashi T."/>
            <person name="Yamashita H."/>
            <person name="Murakawa K."/>
            <person name="Fujimori K."/>
            <person name="Tanai H."/>
            <person name="Kimata M."/>
            <person name="Watanabe M."/>
            <person name="Hiraoka S."/>
            <person name="Chiba Y."/>
            <person name="Ishida S."/>
            <person name="Ono Y."/>
            <person name="Takiguchi S."/>
            <person name="Watanabe S."/>
            <person name="Yosida M."/>
            <person name="Hotuta T."/>
            <person name="Kusano J."/>
            <person name="Kanehori K."/>
            <person name="Takahashi-Fujii A."/>
            <person name="Hara H."/>
            <person name="Tanase T.-O."/>
            <person name="Nomura Y."/>
            <person name="Togiya S."/>
            <person name="Komai F."/>
            <person name="Hara R."/>
            <person name="Takeuchi K."/>
            <person name="Arita M."/>
            <person name="Imose N."/>
            <person name="Musashino K."/>
            <person name="Yuuki H."/>
            <person name="Oshima A."/>
            <person name="Sasaki N."/>
            <person name="Aotsuka S."/>
            <person name="Yoshikawa Y."/>
            <person name="Matsunawa H."/>
            <person name="Ichihara T."/>
            <person name="Shiohata N."/>
            <person name="Sano S."/>
            <person name="Moriya S."/>
            <person name="Momiyama H."/>
            <person name="Satoh N."/>
            <person name="Takami S."/>
            <person name="Terashima Y."/>
            <person name="Suzuki O."/>
            <person name="Nakagawa S."/>
            <person name="Senoh A."/>
            <person name="Mizoguchi H."/>
            <person name="Goto Y."/>
            <person name="Shimizu F."/>
            <person name="Wakebe H."/>
            <person name="Hishigaki H."/>
            <person name="Watanabe T."/>
            <person name="Sugiyama A."/>
            <person name="Takemoto M."/>
            <person name="Kawakami B."/>
            <person name="Yamazaki M."/>
            <person name="Watanabe K."/>
            <person name="Kumagai A."/>
            <person name="Itakura S."/>
            <person name="Fukuzumi Y."/>
            <person name="Fujimori Y."/>
            <person name="Komiyama M."/>
            <person name="Tashiro H."/>
            <person name="Tanigami A."/>
            <person name="Fujiwara T."/>
            <person name="Ono T."/>
            <person name="Yamada K."/>
            <person name="Fujii Y."/>
            <person name="Ozaki K."/>
            <person name="Hirao M."/>
            <person name="Ohmori Y."/>
            <person name="Kawabata A."/>
            <person name="Hikiji T."/>
            <person name="Kobatake N."/>
            <person name="Inagaki H."/>
            <person name="Ikema Y."/>
            <person name="Okamoto S."/>
            <person name="Okitani R."/>
            <person name="Kawakami T."/>
            <person name="Noguchi S."/>
            <person name="Itoh T."/>
            <person name="Shigeta K."/>
            <person name="Senba T."/>
            <person name="Matsumura K."/>
            <person name="Nakajima Y."/>
            <person name="Mizuno T."/>
            <person name="Morinaga M."/>
            <person name="Sasaki M."/>
            <person name="Togashi T."/>
            <person name="Oyama M."/>
            <person name="Hata H."/>
            <person name="Watanabe M."/>
            <person name="Komatsu T."/>
            <person name="Mizushima-Sugano J."/>
            <person name="Satoh T."/>
            <person name="Shirai Y."/>
            <person name="Takahashi Y."/>
            <person name="Nakagawa K."/>
            <person name="Okumura K."/>
            <person name="Nagase T."/>
            <person name="Nomura N."/>
            <person name="Kikuchi H."/>
            <person name="Masuho Y."/>
            <person name="Yamashita R."/>
            <person name="Nakai K."/>
            <person name="Yada T."/>
            <person name="Nakamura Y."/>
            <person name="Ohara O."/>
            <person name="Isogai T."/>
            <person name="Sugano S."/>
        </authorList>
    </citation>
    <scope>NUCLEOTIDE SEQUENCE [LARGE SCALE MRNA]</scope>
    <scope>VARIANT ALA-912</scope>
    <source>
        <tissue>Tongue</tissue>
    </source>
</reference>
<reference key="3">
    <citation type="journal article" date="2005" name="Nature">
        <title>DNA sequence and analysis of human chromosome 18.</title>
        <authorList>
            <person name="Nusbaum C."/>
            <person name="Zody M.C."/>
            <person name="Borowsky M.L."/>
            <person name="Kamal M."/>
            <person name="Kodira C.D."/>
            <person name="Taylor T.D."/>
            <person name="Whittaker C.A."/>
            <person name="Chang J.L."/>
            <person name="Cuomo C.A."/>
            <person name="Dewar K."/>
            <person name="FitzGerald M.G."/>
            <person name="Yang X."/>
            <person name="Abouelleil A."/>
            <person name="Allen N.R."/>
            <person name="Anderson S."/>
            <person name="Bloom T."/>
            <person name="Bugalter B."/>
            <person name="Butler J."/>
            <person name="Cook A."/>
            <person name="DeCaprio D."/>
            <person name="Engels R."/>
            <person name="Garber M."/>
            <person name="Gnirke A."/>
            <person name="Hafez N."/>
            <person name="Hall J.L."/>
            <person name="Norman C.H."/>
            <person name="Itoh T."/>
            <person name="Jaffe D.B."/>
            <person name="Kuroki Y."/>
            <person name="Lehoczky J."/>
            <person name="Lui A."/>
            <person name="Macdonald P."/>
            <person name="Mauceli E."/>
            <person name="Mikkelsen T.S."/>
            <person name="Naylor J.W."/>
            <person name="Nicol R."/>
            <person name="Nguyen C."/>
            <person name="Noguchi H."/>
            <person name="O'Leary S.B."/>
            <person name="Piqani B."/>
            <person name="Smith C.L."/>
            <person name="Talamas J.A."/>
            <person name="Topham K."/>
            <person name="Totoki Y."/>
            <person name="Toyoda A."/>
            <person name="Wain H.M."/>
            <person name="Young S.K."/>
            <person name="Zeng Q."/>
            <person name="Zimmer A.R."/>
            <person name="Fujiyama A."/>
            <person name="Hattori M."/>
            <person name="Birren B.W."/>
            <person name="Sakaki Y."/>
            <person name="Lander E.S."/>
        </authorList>
    </citation>
    <scope>NUCLEOTIDE SEQUENCE [LARGE SCALE GENOMIC DNA]</scope>
</reference>
<reference key="4">
    <citation type="journal article" date="1998" name="J. Cell Sci.">
        <title>Desmoglein 3 anchors telogen hair in the follicle.</title>
        <authorList>
            <person name="Koch P.J."/>
            <person name="Mahoney M.G."/>
            <person name="Cotsarelis G."/>
            <person name="Rothenberger K."/>
            <person name="Lavker R.M."/>
            <person name="Stanley J.R."/>
        </authorList>
    </citation>
    <scope>FUNCTION</scope>
    <scope>TISSUE SPECIFICITY</scope>
</reference>
<reference key="5">
    <citation type="journal article" date="2002" name="J. Biol. Chem.">
        <title>Protein binding and functional characterization of plakophilin 2. Evidence for its diverse roles in desmosomes and beta -catenin signaling.</title>
        <authorList>
            <person name="Chen X."/>
            <person name="Bonne S."/>
            <person name="Hatzfeld M."/>
            <person name="van Roy F."/>
            <person name="Green K.J."/>
        </authorList>
    </citation>
    <scope>INTERACTION WITH PKP2</scope>
</reference>
<reference key="6">
    <citation type="journal article" date="2006" name="J. Proteome Res.">
        <title>Identification of N-linked glycoproteins in human saliva by glycoprotein capture and mass spectrometry.</title>
        <authorList>
            <person name="Ramachandran P."/>
            <person name="Boontheung P."/>
            <person name="Xie Y."/>
            <person name="Sondej M."/>
            <person name="Wong D.T."/>
            <person name="Loo J.A."/>
        </authorList>
    </citation>
    <scope>GLYCOSYLATION [LARGE SCALE ANALYSIS] AT ASN-459 AND ASN-545</scope>
    <scope>TISSUE SPECIFICITY</scope>
    <source>
        <tissue>Saliva</tissue>
    </source>
</reference>
<reference key="7">
    <citation type="journal article" date="2008" name="Exp. Cell Res.">
        <title>P120-catenin is a novel desmoglein 3 interacting partner: identification of the p120-catenin association site of desmoglein 3.</title>
        <authorList>
            <person name="Kanno M."/>
            <person name="Isa Y."/>
            <person name="Aoyama Y."/>
            <person name="Yamamoto Y."/>
            <person name="Nagai M."/>
            <person name="Ozawa M."/>
            <person name="Kitajima Y."/>
        </authorList>
    </citation>
    <scope>INTERACTION WITH CTNND1</scope>
    <scope>SUBCELLULAR LOCATION</scope>
</reference>
<reference key="8">
    <citation type="journal article" date="2009" name="J. Biol. Chem.">
        <title>Desmocollin 3-mediated binding is crucial for keratinocyte cohesion and is impaired in pemphigus.</title>
        <authorList>
            <person name="Spindler V."/>
            <person name="Heupel W.M."/>
            <person name="Efthymiadis A."/>
            <person name="Schmidt E."/>
            <person name="Eming R."/>
            <person name="Rankl C."/>
            <person name="Hinterdorfer P."/>
            <person name="Mueller T."/>
            <person name="Drenckhahn D."/>
            <person name="Waschke J."/>
        </authorList>
    </citation>
    <scope>SUBUNIT</scope>
    <scope>SUBCELLULAR LOCATION</scope>
    <scope>TISSUE SPECIFICITY</scope>
</reference>
<reference key="9">
    <citation type="journal article" date="2011" name="BMC Syst. Biol.">
        <title>Initial characterization of the human central proteome.</title>
        <authorList>
            <person name="Burkard T.R."/>
            <person name="Planyavsky M."/>
            <person name="Kaupe I."/>
            <person name="Breitwieser F.P."/>
            <person name="Buerckstuemmer T."/>
            <person name="Bennett K.L."/>
            <person name="Superti-Furga G."/>
            <person name="Colinge J."/>
        </authorList>
    </citation>
    <scope>IDENTIFICATION BY MASS SPECTROMETRY [LARGE SCALE ANALYSIS]</scope>
</reference>
<reference key="10">
    <citation type="journal article" date="2012" name="Exp. Cell Res.">
        <title>Desmoglein 3 acting as an upstream regulator of Rho GTPases, Rac-1/Cdc42 in the regulation of actin organisation and dynamics.</title>
        <authorList>
            <person name="Tsang S.M."/>
            <person name="Brown L."/>
            <person name="Gadmor H."/>
            <person name="Gammon L."/>
            <person name="Fortune F."/>
            <person name="Wheeler A."/>
            <person name="Wan H."/>
        </authorList>
    </citation>
    <scope>FUNCTION</scope>
    <scope>INTERACTION WITH RAC1</scope>
    <scope>SUBCELLULAR LOCATION</scope>
</reference>
<reference key="11">
    <citation type="journal article" date="2012" name="J. Pathol.">
        <title>Non-junctional human desmoglein 3 acts as an upstream regulator of Src in E-cadherin adhesion, a pathway possibly involved in the pathogenesis of pemphigus vulgaris.</title>
        <authorList>
            <person name="Tsang S.M."/>
            <person name="Brown L."/>
            <person name="Lin K."/>
            <person name="Liu L."/>
            <person name="Piper K."/>
            <person name="O'Toole E.A."/>
            <person name="Grose R."/>
            <person name="Hart I.R."/>
            <person name="Garrod D.R."/>
            <person name="Fortune F."/>
            <person name="Wan H."/>
        </authorList>
    </citation>
    <scope>FUNCTION</scope>
    <scope>INTERACTION WITH CDH1</scope>
    <scope>TISSUE SPECIFICITY</scope>
</reference>
<reference key="12">
    <citation type="journal article" date="2016" name="J. Invest. Dermatol.">
        <title>Desmoglein 3-Dependent Signaling Regulates Keratinocyte Migration and Wound Healing.</title>
        <authorList>
            <person name="Roetzer V."/>
            <person name="Hartlieb E."/>
            <person name="Winkler J."/>
            <person name="Walter E."/>
            <person name="Schlipp A."/>
            <person name="Sardy M."/>
            <person name="Spindler V."/>
            <person name="Waschke J."/>
        </authorList>
    </citation>
    <scope>FUNCTION</scope>
</reference>
<reference key="13">
    <citation type="journal article" date="2019" name="Cell. Mol. Life Sci.">
        <title>Plakophilin 1 but not plakophilin 3 regulates desmoglein clustering.</title>
        <authorList>
            <person name="Fuchs M."/>
            <person name="Foresti M."/>
            <person name="Radeva M.Y."/>
            <person name="Kugelmann D."/>
            <person name="Keil R."/>
            <person name="Hatzfeld M."/>
            <person name="Spindler V."/>
            <person name="Waschke J."/>
            <person name="Vielmuth F."/>
        </authorList>
    </citation>
    <scope>SUBCELLULAR LOCATION</scope>
</reference>
<reference key="14">
    <citation type="journal article" date="2019" name="Int. J. Mol. Sci.">
        <title>Evidence for the Desmosomal Cadherin Desmoglein-3 in Regulating YAP and Phospho-YAP in Keratinocyte Responses to Mechanical Forces.</title>
        <authorList>
            <person name="Uttagomol J."/>
            <person name="Ahmad U.S."/>
            <person name="Rehman A."/>
            <person name="Huang Y."/>
            <person name="Laly A.C."/>
            <person name="Kang A."/>
            <person name="Soetaert J."/>
            <person name="Chance R."/>
            <person name="Teh M.T."/>
            <person name="Connelly J.T."/>
            <person name="Wan H."/>
        </authorList>
    </citation>
    <scope>FUNCTION</scope>
    <scope>IDENTIFICATION IN A COMPLEX WITH PKP1; YAP1 AND YWHAG</scope>
    <scope>INTERACTION WITH PKP1; YAP1 AND YWHAG</scope>
    <scope>SUBCELLULAR LOCATION</scope>
    <scope>INDUCTION</scope>
</reference>
<reference key="15">
    <citation type="journal article" date="2019" name="J. Invest. Dermatol.">
        <title>A Homozygous Nonsense Mutation in the DSG3 Gene Causes Acantholytic Blisters in the Oral and Laryngeal Mucosa.</title>
        <authorList>
            <person name="Kim J.H."/>
            <person name="Kim S.E."/>
            <person name="Park H.S."/>
            <person name="Lee S.H."/>
            <person name="Lee S.E."/>
            <person name="Kim S.C."/>
        </authorList>
    </citation>
    <scope>VARIANT ABOLM 287-ARG--ILE-999 DEL</scope>
    <scope>CHARACTERIZATION OF VARIANT ABOLM 287-ARG--ILE-999 DEL</scope>
    <scope>TISSUE SPECIFICITY</scope>
</reference>